<gene>
    <name evidence="2" type="primary">pyrR</name>
    <name type="ordered locus">M6_Spy0657</name>
</gene>
<feature type="chain" id="PRO_0000183068" description="Bifunctional protein PyrR">
    <location>
        <begin position="1"/>
        <end position="173"/>
    </location>
</feature>
<feature type="short sequence motif" description="PRPP-binding" evidence="2">
    <location>
        <begin position="93"/>
        <end position="105"/>
    </location>
</feature>
<feature type="binding site" evidence="1">
    <location>
        <begin position="40"/>
        <end position="41"/>
    </location>
    <ligand>
        <name>substrate</name>
    </ligand>
</feature>
<feature type="binding site" evidence="1">
    <location>
        <begin position="97"/>
        <end position="105"/>
    </location>
    <ligand>
        <name>substrate</name>
    </ligand>
</feature>
<feature type="binding site" evidence="1">
    <location>
        <position position="130"/>
    </location>
    <ligand>
        <name>substrate</name>
    </ligand>
</feature>
<accession>Q5XCS1</accession>
<protein>
    <recommendedName>
        <fullName evidence="2">Bifunctional protein PyrR</fullName>
    </recommendedName>
    <domain>
        <recommendedName>
            <fullName evidence="2">Pyrimidine operon regulatory protein</fullName>
        </recommendedName>
    </domain>
    <domain>
        <recommendedName>
            <fullName evidence="2">Uracil phosphoribosyltransferase</fullName>
            <shortName evidence="2">UPRTase</shortName>
            <ecNumber evidence="2">2.4.2.9</ecNumber>
        </recommendedName>
    </domain>
</protein>
<dbReference type="EC" id="2.4.2.9" evidence="2"/>
<dbReference type="EMBL" id="CP000003">
    <property type="protein sequence ID" value="AAT86792.1"/>
    <property type="molecule type" value="Genomic_DNA"/>
</dbReference>
<dbReference type="RefSeq" id="WP_009881107.1">
    <property type="nucleotide sequence ID" value="NC_006086.1"/>
</dbReference>
<dbReference type="SMR" id="Q5XCS1"/>
<dbReference type="KEGG" id="spa:M6_Spy0657"/>
<dbReference type="HOGENOM" id="CLU_094234_2_1_9"/>
<dbReference type="Proteomes" id="UP000001167">
    <property type="component" value="Chromosome"/>
</dbReference>
<dbReference type="GO" id="GO:0003723">
    <property type="term" value="F:RNA binding"/>
    <property type="evidence" value="ECO:0007669"/>
    <property type="project" value="UniProtKB-UniRule"/>
</dbReference>
<dbReference type="GO" id="GO:0004845">
    <property type="term" value="F:uracil phosphoribosyltransferase activity"/>
    <property type="evidence" value="ECO:0007669"/>
    <property type="project" value="UniProtKB-UniRule"/>
</dbReference>
<dbReference type="GO" id="GO:0006353">
    <property type="term" value="P:DNA-templated transcription termination"/>
    <property type="evidence" value="ECO:0007669"/>
    <property type="project" value="UniProtKB-UniRule"/>
</dbReference>
<dbReference type="CDD" id="cd06223">
    <property type="entry name" value="PRTases_typeI"/>
    <property type="match status" value="1"/>
</dbReference>
<dbReference type="FunFam" id="3.40.50.2020:FF:000020">
    <property type="entry name" value="Bifunctional protein PyrR"/>
    <property type="match status" value="1"/>
</dbReference>
<dbReference type="Gene3D" id="3.40.50.2020">
    <property type="match status" value="1"/>
</dbReference>
<dbReference type="HAMAP" id="MF_01219">
    <property type="entry name" value="PyrR"/>
    <property type="match status" value="1"/>
</dbReference>
<dbReference type="InterPro" id="IPR000836">
    <property type="entry name" value="PRibTrfase_dom"/>
</dbReference>
<dbReference type="InterPro" id="IPR029057">
    <property type="entry name" value="PRTase-like"/>
</dbReference>
<dbReference type="InterPro" id="IPR023050">
    <property type="entry name" value="PyrR"/>
</dbReference>
<dbReference type="InterPro" id="IPR050137">
    <property type="entry name" value="PyrR_bifunctional"/>
</dbReference>
<dbReference type="NCBIfam" id="NF003548">
    <property type="entry name" value="PRK05205.1-4"/>
    <property type="match status" value="1"/>
</dbReference>
<dbReference type="NCBIfam" id="NF003549">
    <property type="entry name" value="PRK05205.1-5"/>
    <property type="match status" value="1"/>
</dbReference>
<dbReference type="PANTHER" id="PTHR11608">
    <property type="entry name" value="BIFUNCTIONAL PROTEIN PYRR"/>
    <property type="match status" value="1"/>
</dbReference>
<dbReference type="PANTHER" id="PTHR11608:SF0">
    <property type="entry name" value="BIFUNCTIONAL PROTEIN PYRR"/>
    <property type="match status" value="1"/>
</dbReference>
<dbReference type="Pfam" id="PF00156">
    <property type="entry name" value="Pribosyltran"/>
    <property type="match status" value="1"/>
</dbReference>
<dbReference type="SUPFAM" id="SSF53271">
    <property type="entry name" value="PRTase-like"/>
    <property type="match status" value="1"/>
</dbReference>
<keyword id="KW-0328">Glycosyltransferase</keyword>
<keyword id="KW-0694">RNA-binding</keyword>
<keyword id="KW-0804">Transcription</keyword>
<keyword id="KW-0805">Transcription regulation</keyword>
<keyword id="KW-0806">Transcription termination</keyword>
<keyword id="KW-0808">Transferase</keyword>
<organism>
    <name type="scientific">Streptococcus pyogenes serotype M6 (strain ATCC BAA-946 / MGAS10394)</name>
    <dbReference type="NCBI Taxonomy" id="286636"/>
    <lineage>
        <taxon>Bacteria</taxon>
        <taxon>Bacillati</taxon>
        <taxon>Bacillota</taxon>
        <taxon>Bacilli</taxon>
        <taxon>Lactobacillales</taxon>
        <taxon>Streptococcaceae</taxon>
        <taxon>Streptococcus</taxon>
    </lineage>
</organism>
<sequence>MKTKEIVDDVTMKRAITRITYEIIERNKQLDNVVLAGIKTRGVFLARRIQERLHQLEGLDLPIGELDTKPFRDDMRVEEDTTLMSVDITGKDVILIDDVLYTGRTIRAAIDNLVSLGRPARVSLAVLVDRGHRELPIRADYVGKNIPTSSVEEIVVEVVEVDGRDRVSIIDPT</sequence>
<reference key="1">
    <citation type="journal article" date="2004" name="J. Infect. Dis.">
        <title>Progress toward characterization of the group A Streptococcus metagenome: complete genome sequence of a macrolide-resistant serotype M6 strain.</title>
        <authorList>
            <person name="Banks D.J."/>
            <person name="Porcella S.F."/>
            <person name="Barbian K.D."/>
            <person name="Beres S.B."/>
            <person name="Philips L.E."/>
            <person name="Voyich J.M."/>
            <person name="DeLeo F.R."/>
            <person name="Martin J.M."/>
            <person name="Somerville G.A."/>
            <person name="Musser J.M."/>
        </authorList>
    </citation>
    <scope>NUCLEOTIDE SEQUENCE [LARGE SCALE GENOMIC DNA]</scope>
    <source>
        <strain>ATCC BAA-946 / MGAS10394</strain>
    </source>
</reference>
<proteinExistence type="inferred from homology"/>
<name>PYRR_STRP6</name>
<evidence type="ECO:0000250" key="1"/>
<evidence type="ECO:0000255" key="2">
    <source>
        <dbReference type="HAMAP-Rule" id="MF_01219"/>
    </source>
</evidence>
<comment type="function">
    <text evidence="2">Regulates transcriptional attenuation of the pyrimidine nucleotide (pyr) operon by binding in a uridine-dependent manner to specific sites on pyr mRNA. This disrupts an antiterminator hairpin in the RNA and favors formation of a downstream transcription terminator, leading to a reduced expression of downstream genes.</text>
</comment>
<comment type="function">
    <text evidence="2">Also displays a weak uracil phosphoribosyltransferase activity which is not physiologically significant.</text>
</comment>
<comment type="catalytic activity">
    <reaction evidence="2">
        <text>UMP + diphosphate = 5-phospho-alpha-D-ribose 1-diphosphate + uracil</text>
        <dbReference type="Rhea" id="RHEA:13017"/>
        <dbReference type="ChEBI" id="CHEBI:17568"/>
        <dbReference type="ChEBI" id="CHEBI:33019"/>
        <dbReference type="ChEBI" id="CHEBI:57865"/>
        <dbReference type="ChEBI" id="CHEBI:58017"/>
        <dbReference type="EC" id="2.4.2.9"/>
    </reaction>
</comment>
<comment type="subunit">
    <text evidence="2">Homodimer and homohexamer; in equilibrium.</text>
</comment>
<comment type="similarity">
    <text evidence="2">Belongs to the purine/pyrimidine phosphoribosyltransferase family. PyrR subfamily.</text>
</comment>